<name>NSRR_VIBC1</name>
<proteinExistence type="inferred from homology"/>
<feature type="chain" id="PRO_1000085439" description="HTH-type transcriptional repressor NsrR">
    <location>
        <begin position="1"/>
        <end position="141"/>
    </location>
</feature>
<feature type="domain" description="HTH rrf2-type" evidence="1">
    <location>
        <begin position="2"/>
        <end position="129"/>
    </location>
</feature>
<feature type="DNA-binding region" description="H-T-H motif" evidence="1">
    <location>
        <begin position="28"/>
        <end position="51"/>
    </location>
</feature>
<feature type="binding site" evidence="1">
    <location>
        <position position="91"/>
    </location>
    <ligand>
        <name>[2Fe-2S] cluster</name>
        <dbReference type="ChEBI" id="CHEBI:190135"/>
    </ligand>
</feature>
<feature type="binding site" evidence="1">
    <location>
        <position position="96"/>
    </location>
    <ligand>
        <name>[2Fe-2S] cluster</name>
        <dbReference type="ChEBI" id="CHEBI:190135"/>
    </ligand>
</feature>
<feature type="binding site" evidence="1">
    <location>
        <position position="102"/>
    </location>
    <ligand>
        <name>[2Fe-2S] cluster</name>
        <dbReference type="ChEBI" id="CHEBI:190135"/>
    </ligand>
</feature>
<evidence type="ECO:0000255" key="1">
    <source>
        <dbReference type="HAMAP-Rule" id="MF_01177"/>
    </source>
</evidence>
<dbReference type="EMBL" id="CP000789">
    <property type="protein sequence ID" value="ABU69146.1"/>
    <property type="molecule type" value="Genomic_DNA"/>
</dbReference>
<dbReference type="RefSeq" id="WP_005432776.1">
    <property type="nucleotide sequence ID" value="NC_022269.1"/>
</dbReference>
<dbReference type="SMR" id="A7MX86"/>
<dbReference type="KEGG" id="vha:VIBHAR_00086"/>
<dbReference type="PATRIC" id="fig|338187.25.peg.2435"/>
<dbReference type="Proteomes" id="UP000008152">
    <property type="component" value="Chromosome I"/>
</dbReference>
<dbReference type="GO" id="GO:0005829">
    <property type="term" value="C:cytosol"/>
    <property type="evidence" value="ECO:0007669"/>
    <property type="project" value="TreeGrafter"/>
</dbReference>
<dbReference type="GO" id="GO:0051537">
    <property type="term" value="F:2 iron, 2 sulfur cluster binding"/>
    <property type="evidence" value="ECO:0007669"/>
    <property type="project" value="UniProtKB-KW"/>
</dbReference>
<dbReference type="GO" id="GO:0003700">
    <property type="term" value="F:DNA-binding transcription factor activity"/>
    <property type="evidence" value="ECO:0007669"/>
    <property type="project" value="UniProtKB-UniRule"/>
</dbReference>
<dbReference type="GO" id="GO:0003690">
    <property type="term" value="F:double-stranded DNA binding"/>
    <property type="evidence" value="ECO:0007669"/>
    <property type="project" value="UniProtKB-UniRule"/>
</dbReference>
<dbReference type="GO" id="GO:0005506">
    <property type="term" value="F:iron ion binding"/>
    <property type="evidence" value="ECO:0007669"/>
    <property type="project" value="UniProtKB-UniRule"/>
</dbReference>
<dbReference type="GO" id="GO:0045892">
    <property type="term" value="P:negative regulation of DNA-templated transcription"/>
    <property type="evidence" value="ECO:0007669"/>
    <property type="project" value="InterPro"/>
</dbReference>
<dbReference type="FunFam" id="1.10.10.10:FF:000105">
    <property type="entry name" value="HTH-type transcriptional repressor NsrR"/>
    <property type="match status" value="1"/>
</dbReference>
<dbReference type="Gene3D" id="1.10.10.10">
    <property type="entry name" value="Winged helix-like DNA-binding domain superfamily/Winged helix DNA-binding domain"/>
    <property type="match status" value="1"/>
</dbReference>
<dbReference type="HAMAP" id="MF_01177">
    <property type="entry name" value="HTH_type_NsrR"/>
    <property type="match status" value="1"/>
</dbReference>
<dbReference type="InterPro" id="IPR030489">
    <property type="entry name" value="TR_Rrf2-type_CS"/>
</dbReference>
<dbReference type="InterPro" id="IPR000944">
    <property type="entry name" value="Tscrpt_reg_Rrf2"/>
</dbReference>
<dbReference type="InterPro" id="IPR023761">
    <property type="entry name" value="Tscrpt_rep_HTH_NsrR"/>
</dbReference>
<dbReference type="InterPro" id="IPR036388">
    <property type="entry name" value="WH-like_DNA-bd_sf"/>
</dbReference>
<dbReference type="InterPro" id="IPR036390">
    <property type="entry name" value="WH_DNA-bd_sf"/>
</dbReference>
<dbReference type="NCBIfam" id="NF008240">
    <property type="entry name" value="PRK11014.1"/>
    <property type="match status" value="1"/>
</dbReference>
<dbReference type="NCBIfam" id="TIGR00738">
    <property type="entry name" value="rrf2_super"/>
    <property type="match status" value="1"/>
</dbReference>
<dbReference type="PANTHER" id="PTHR33221:SF4">
    <property type="entry name" value="HTH-TYPE TRANSCRIPTIONAL REPRESSOR NSRR"/>
    <property type="match status" value="1"/>
</dbReference>
<dbReference type="PANTHER" id="PTHR33221">
    <property type="entry name" value="WINGED HELIX-TURN-HELIX TRANSCRIPTIONAL REGULATOR, RRF2 FAMILY"/>
    <property type="match status" value="1"/>
</dbReference>
<dbReference type="Pfam" id="PF02082">
    <property type="entry name" value="Rrf2"/>
    <property type="match status" value="1"/>
</dbReference>
<dbReference type="SUPFAM" id="SSF46785">
    <property type="entry name" value="Winged helix' DNA-binding domain"/>
    <property type="match status" value="1"/>
</dbReference>
<dbReference type="PROSITE" id="PS01332">
    <property type="entry name" value="HTH_RRF2_1"/>
    <property type="match status" value="1"/>
</dbReference>
<dbReference type="PROSITE" id="PS51197">
    <property type="entry name" value="HTH_RRF2_2"/>
    <property type="match status" value="1"/>
</dbReference>
<comment type="function">
    <text evidence="1">Nitric oxide-sensitive repressor of genes involved in protecting the cell against nitrosative stress. May require iron for activity.</text>
</comment>
<comment type="cofactor">
    <cofactor evidence="1">
        <name>[2Fe-2S] cluster</name>
        <dbReference type="ChEBI" id="CHEBI:190135"/>
    </cofactor>
    <text evidence="1">Binds 1 [2Fe-2S] cluster per subunit.</text>
</comment>
<reference key="1">
    <citation type="submission" date="2007-08" db="EMBL/GenBank/DDBJ databases">
        <authorList>
            <consortium name="The Vibrio harveyi Genome Sequencing Project"/>
            <person name="Bassler B."/>
            <person name="Clifton S.W."/>
            <person name="Fulton L."/>
            <person name="Delehaunty K."/>
            <person name="Fronick C."/>
            <person name="Harrison M."/>
            <person name="Markivic C."/>
            <person name="Fulton R."/>
            <person name="Tin-Wollam A.-M."/>
            <person name="Shah N."/>
            <person name="Pepin K."/>
            <person name="Nash W."/>
            <person name="Thiruvilangam P."/>
            <person name="Bhonagiri V."/>
            <person name="Waters C."/>
            <person name="Tu K.C."/>
            <person name="Irgon J."/>
            <person name="Wilson R.K."/>
        </authorList>
    </citation>
    <scope>NUCLEOTIDE SEQUENCE [LARGE SCALE GENOMIC DNA]</scope>
    <source>
        <strain>ATCC BAA-1116 / BB120</strain>
    </source>
</reference>
<keyword id="KW-0001">2Fe-2S</keyword>
<keyword id="KW-0238">DNA-binding</keyword>
<keyword id="KW-0408">Iron</keyword>
<keyword id="KW-0411">Iron-sulfur</keyword>
<keyword id="KW-0479">Metal-binding</keyword>
<keyword id="KW-0678">Repressor</keyword>
<keyword id="KW-0804">Transcription</keyword>
<keyword id="KW-0805">Transcription regulation</keyword>
<protein>
    <recommendedName>
        <fullName evidence="1">HTH-type transcriptional repressor NsrR</fullName>
    </recommendedName>
</protein>
<sequence>MQLTSFTDYALRTLIYLASLPKDELTNITEVTDLFGVSRNHMVKVINRLGQLGYVHTVRGKNGGIRLMKAPQEITVGGVVRDLEPLDLVNCSVEFCHITPACRLKEKLAKAKLAFLAELDDCTIEELLSDNSELLILLARP</sequence>
<gene>
    <name evidence="1" type="primary">nsrR</name>
    <name type="ordered locus">VIBHAR_00086</name>
</gene>
<accession>A7MX86</accession>
<organism>
    <name type="scientific">Vibrio campbellii (strain ATCC BAA-1116)</name>
    <dbReference type="NCBI Taxonomy" id="2902295"/>
    <lineage>
        <taxon>Bacteria</taxon>
        <taxon>Pseudomonadati</taxon>
        <taxon>Pseudomonadota</taxon>
        <taxon>Gammaproteobacteria</taxon>
        <taxon>Vibrionales</taxon>
        <taxon>Vibrionaceae</taxon>
        <taxon>Vibrio</taxon>
    </lineage>
</organism>